<name>PSTC1_MYCBO</name>
<protein>
    <recommendedName>
        <fullName>Phosphate transport system permease protein PstC 1</fullName>
    </recommendedName>
</protein>
<sequence>MLARAGEVGRAGPAIRWLGGIGAVIPLLALVLVLVVLVIEAMGAIRLNGLHFFTATEWNPGNTYGETVVTDGVAHPVGAYYGALPLIVGTLATSAIALIIAVPVSVGAALVIVERLPKRLAEAVGIVLELLAGIPSVVVGLWGAMTFGPFIAHHIAPVIAHNAPDVPVLNYLRGDPGNGEGMLVSGLVLAVMVVPIIATTTHDLFRQVPVLPREGAIALGMSNWECVRRVTLPWVSSGIVGAVVLGLGRALGETMAVAMVSGAVLGAMPANIYATMTTIAATIVSQLDSAMTDSTNFAVKTLAEVGLVLMVITLLTNVAARGMVRRVSRTALPVGRGI</sequence>
<feature type="chain" id="PRO_0000060215" description="Phosphate transport system permease protein PstC 1">
    <location>
        <begin position="1"/>
        <end position="338"/>
    </location>
</feature>
<feature type="transmembrane region" description="Helical" evidence="2">
    <location>
        <begin position="19"/>
        <end position="39"/>
    </location>
</feature>
<feature type="transmembrane region" description="Helical" evidence="2">
    <location>
        <begin position="93"/>
        <end position="113"/>
    </location>
</feature>
<feature type="transmembrane region" description="Helical" evidence="2">
    <location>
        <begin position="123"/>
        <end position="143"/>
    </location>
</feature>
<feature type="transmembrane region" description="Helical" evidence="2">
    <location>
        <begin position="144"/>
        <end position="164"/>
    </location>
</feature>
<feature type="transmembrane region" description="Helical" evidence="2">
    <location>
        <begin position="181"/>
        <end position="201"/>
    </location>
</feature>
<feature type="transmembrane region" description="Helical" evidence="2">
    <location>
        <begin position="232"/>
        <end position="252"/>
    </location>
</feature>
<feature type="transmembrane region" description="Helical" evidence="2">
    <location>
        <begin position="254"/>
        <end position="274"/>
    </location>
</feature>
<feature type="transmembrane region" description="Helical" evidence="2">
    <location>
        <begin position="295"/>
        <end position="315"/>
    </location>
</feature>
<feature type="domain" description="ABC transmembrane type-1" evidence="2">
    <location>
        <begin position="87"/>
        <end position="320"/>
    </location>
</feature>
<dbReference type="EMBL" id="LT708304">
    <property type="protein sequence ID" value="SIT99558.1"/>
    <property type="molecule type" value="Genomic_DNA"/>
</dbReference>
<dbReference type="RefSeq" id="NP_854617.1">
    <property type="nucleotide sequence ID" value="NC_002945.3"/>
</dbReference>
<dbReference type="RefSeq" id="WP_003404792.1">
    <property type="nucleotide sequence ID" value="NC_002945.4"/>
</dbReference>
<dbReference type="KEGG" id="mbo:BQ2027_MB0960"/>
<dbReference type="PATRIC" id="fig|233413.5.peg.1045"/>
<dbReference type="Proteomes" id="UP000001419">
    <property type="component" value="Chromosome"/>
</dbReference>
<dbReference type="GO" id="GO:0005886">
    <property type="term" value="C:plasma membrane"/>
    <property type="evidence" value="ECO:0007669"/>
    <property type="project" value="UniProtKB-SubCell"/>
</dbReference>
<dbReference type="GO" id="GO:0005315">
    <property type="term" value="F:phosphate transmembrane transporter activity"/>
    <property type="evidence" value="ECO:0007669"/>
    <property type="project" value="InterPro"/>
</dbReference>
<dbReference type="GO" id="GO:0006817">
    <property type="term" value="P:phosphate ion transport"/>
    <property type="evidence" value="ECO:0007669"/>
    <property type="project" value="UniProtKB-KW"/>
</dbReference>
<dbReference type="CDD" id="cd06261">
    <property type="entry name" value="TM_PBP2"/>
    <property type="match status" value="1"/>
</dbReference>
<dbReference type="Gene3D" id="1.10.3720.10">
    <property type="entry name" value="MetI-like"/>
    <property type="match status" value="1"/>
</dbReference>
<dbReference type="InterPro" id="IPR000515">
    <property type="entry name" value="MetI-like"/>
</dbReference>
<dbReference type="InterPro" id="IPR035906">
    <property type="entry name" value="MetI-like_sf"/>
</dbReference>
<dbReference type="InterPro" id="IPR011864">
    <property type="entry name" value="Phosphate_PstC"/>
</dbReference>
<dbReference type="InterPro" id="IPR051124">
    <property type="entry name" value="Phosphate_Transport_Permease"/>
</dbReference>
<dbReference type="NCBIfam" id="TIGR02138">
    <property type="entry name" value="phosphate_pstC"/>
    <property type="match status" value="1"/>
</dbReference>
<dbReference type="PANTHER" id="PTHR30425">
    <property type="entry name" value="PHOSPHATE TRANSPORT SYSTEM PERMEASE PROTEIN PST"/>
    <property type="match status" value="1"/>
</dbReference>
<dbReference type="PANTHER" id="PTHR30425:SF1">
    <property type="entry name" value="PHOSPHATE TRANSPORT SYSTEM PERMEASE PROTEIN PSTC"/>
    <property type="match status" value="1"/>
</dbReference>
<dbReference type="Pfam" id="PF00528">
    <property type="entry name" value="BPD_transp_1"/>
    <property type="match status" value="1"/>
</dbReference>
<dbReference type="SUPFAM" id="SSF161098">
    <property type="entry name" value="MetI-like"/>
    <property type="match status" value="1"/>
</dbReference>
<dbReference type="PROSITE" id="PS50928">
    <property type="entry name" value="ABC_TM1"/>
    <property type="match status" value="1"/>
</dbReference>
<proteinExistence type="inferred from homology"/>
<accession>P0A629</accession>
<accession>A0A1R3XWU0</accession>
<accession>O05867</accession>
<accession>P95303</accession>
<accession>X2BGK3</accession>
<organism>
    <name type="scientific">Mycobacterium bovis (strain ATCC BAA-935 / AF2122/97)</name>
    <dbReference type="NCBI Taxonomy" id="233413"/>
    <lineage>
        <taxon>Bacteria</taxon>
        <taxon>Bacillati</taxon>
        <taxon>Actinomycetota</taxon>
        <taxon>Actinomycetes</taxon>
        <taxon>Mycobacteriales</taxon>
        <taxon>Mycobacteriaceae</taxon>
        <taxon>Mycobacterium</taxon>
        <taxon>Mycobacterium tuberculosis complex</taxon>
    </lineage>
</organism>
<comment type="function">
    <text evidence="1">Part of the binding-protein-dependent transport system for phosphate; probably responsible for the translocation of the substrate across the membrane.</text>
</comment>
<comment type="subcellular location">
    <subcellularLocation>
        <location evidence="1">Cell membrane</location>
        <topology evidence="2">Multi-pass membrane protein</topology>
    </subcellularLocation>
</comment>
<comment type="similarity">
    <text evidence="3">Belongs to the binding-protein-dependent transport system permease family. CysTW subfamily.</text>
</comment>
<gene>
    <name type="primary">pstC1</name>
    <name type="synonym">pstC</name>
    <name type="ordered locus">BQ2027_MB0960</name>
</gene>
<evidence type="ECO:0000250" key="1"/>
<evidence type="ECO:0000255" key="2">
    <source>
        <dbReference type="PROSITE-ProRule" id="PRU00441"/>
    </source>
</evidence>
<evidence type="ECO:0000305" key="3"/>
<keyword id="KW-1003">Cell membrane</keyword>
<keyword id="KW-0472">Membrane</keyword>
<keyword id="KW-0592">Phosphate transport</keyword>
<keyword id="KW-1185">Reference proteome</keyword>
<keyword id="KW-0812">Transmembrane</keyword>
<keyword id="KW-1133">Transmembrane helix</keyword>
<keyword id="KW-0813">Transport</keyword>
<reference key="1">
    <citation type="journal article" date="2003" name="Proc. Natl. Acad. Sci. U.S.A.">
        <title>The complete genome sequence of Mycobacterium bovis.</title>
        <authorList>
            <person name="Garnier T."/>
            <person name="Eiglmeier K."/>
            <person name="Camus J.-C."/>
            <person name="Medina N."/>
            <person name="Mansoor H."/>
            <person name="Pryor M."/>
            <person name="Duthoy S."/>
            <person name="Grondin S."/>
            <person name="Lacroix C."/>
            <person name="Monsempe C."/>
            <person name="Simon S."/>
            <person name="Harris B."/>
            <person name="Atkin R."/>
            <person name="Doggett J."/>
            <person name="Mayes R."/>
            <person name="Keating L."/>
            <person name="Wheeler P.R."/>
            <person name="Parkhill J."/>
            <person name="Barrell B.G."/>
            <person name="Cole S.T."/>
            <person name="Gordon S.V."/>
            <person name="Hewinson R.G."/>
        </authorList>
    </citation>
    <scope>NUCLEOTIDE SEQUENCE [LARGE SCALE GENOMIC DNA]</scope>
    <source>
        <strain>ATCC BAA-935 / AF2122/97</strain>
    </source>
</reference>
<reference key="2">
    <citation type="journal article" date="2017" name="Genome Announc.">
        <title>Updated reference genome sequence and annotation of Mycobacterium bovis AF2122/97.</title>
        <authorList>
            <person name="Malone K.M."/>
            <person name="Farrell D."/>
            <person name="Stuber T.P."/>
            <person name="Schubert O.T."/>
            <person name="Aebersold R."/>
            <person name="Robbe-Austerman S."/>
            <person name="Gordon S.V."/>
        </authorList>
    </citation>
    <scope>NUCLEOTIDE SEQUENCE [LARGE SCALE GENOMIC DNA]</scope>
    <scope>GENOME REANNOTATION</scope>
    <source>
        <strain>ATCC BAA-935 / AF2122/97</strain>
    </source>
</reference>